<accession>Q3APG9</accession>
<evidence type="ECO:0000255" key="1">
    <source>
        <dbReference type="HAMAP-Rule" id="MF_00480"/>
    </source>
</evidence>
<evidence type="ECO:0000305" key="2"/>
<keyword id="KW-0687">Ribonucleoprotein</keyword>
<keyword id="KW-0689">Ribosomal protein</keyword>
<keyword id="KW-0694">RNA-binding</keyword>
<keyword id="KW-0699">rRNA-binding</keyword>
<keyword id="KW-0820">tRNA-binding</keyword>
<reference key="1">
    <citation type="submission" date="2005-08" db="EMBL/GenBank/DDBJ databases">
        <title>Complete sequence of Chlorobium chlorochromatii CaD3.</title>
        <authorList>
            <consortium name="US DOE Joint Genome Institute"/>
            <person name="Copeland A."/>
            <person name="Lucas S."/>
            <person name="Lapidus A."/>
            <person name="Barry K."/>
            <person name="Detter J.C."/>
            <person name="Glavina T."/>
            <person name="Hammon N."/>
            <person name="Israni S."/>
            <person name="Pitluck S."/>
            <person name="Bryant D."/>
            <person name="Schmutz J."/>
            <person name="Larimer F."/>
            <person name="Land M."/>
            <person name="Kyrpides N."/>
            <person name="Ivanova N."/>
            <person name="Richardson P."/>
        </authorList>
    </citation>
    <scope>NUCLEOTIDE SEQUENCE [LARGE SCALE GENOMIC DNA]</scope>
    <source>
        <strain>CaD3</strain>
    </source>
</reference>
<dbReference type="EMBL" id="CP000108">
    <property type="protein sequence ID" value="ABB29106.1"/>
    <property type="molecule type" value="Genomic_DNA"/>
</dbReference>
<dbReference type="SMR" id="Q3APG9"/>
<dbReference type="STRING" id="340177.Cag_1855"/>
<dbReference type="KEGG" id="cch:Cag_1855"/>
<dbReference type="eggNOG" id="COG0049">
    <property type="taxonomic scope" value="Bacteria"/>
</dbReference>
<dbReference type="HOGENOM" id="CLU_072226_1_1_10"/>
<dbReference type="OrthoDB" id="9807653at2"/>
<dbReference type="GO" id="GO:0015935">
    <property type="term" value="C:small ribosomal subunit"/>
    <property type="evidence" value="ECO:0007669"/>
    <property type="project" value="InterPro"/>
</dbReference>
<dbReference type="GO" id="GO:0019843">
    <property type="term" value="F:rRNA binding"/>
    <property type="evidence" value="ECO:0007669"/>
    <property type="project" value="UniProtKB-UniRule"/>
</dbReference>
<dbReference type="GO" id="GO:0003735">
    <property type="term" value="F:structural constituent of ribosome"/>
    <property type="evidence" value="ECO:0007669"/>
    <property type="project" value="InterPro"/>
</dbReference>
<dbReference type="GO" id="GO:0000049">
    <property type="term" value="F:tRNA binding"/>
    <property type="evidence" value="ECO:0007669"/>
    <property type="project" value="UniProtKB-UniRule"/>
</dbReference>
<dbReference type="GO" id="GO:0006412">
    <property type="term" value="P:translation"/>
    <property type="evidence" value="ECO:0007669"/>
    <property type="project" value="UniProtKB-UniRule"/>
</dbReference>
<dbReference type="CDD" id="cd14869">
    <property type="entry name" value="uS7_Bacteria"/>
    <property type="match status" value="1"/>
</dbReference>
<dbReference type="FunFam" id="1.10.455.10:FF:000001">
    <property type="entry name" value="30S ribosomal protein S7"/>
    <property type="match status" value="1"/>
</dbReference>
<dbReference type="Gene3D" id="1.10.455.10">
    <property type="entry name" value="Ribosomal protein S7 domain"/>
    <property type="match status" value="1"/>
</dbReference>
<dbReference type="HAMAP" id="MF_00480_B">
    <property type="entry name" value="Ribosomal_uS7_B"/>
    <property type="match status" value="1"/>
</dbReference>
<dbReference type="InterPro" id="IPR000235">
    <property type="entry name" value="Ribosomal_uS7"/>
</dbReference>
<dbReference type="InterPro" id="IPR005717">
    <property type="entry name" value="Ribosomal_uS7_bac/org-type"/>
</dbReference>
<dbReference type="InterPro" id="IPR023798">
    <property type="entry name" value="Ribosomal_uS7_dom"/>
</dbReference>
<dbReference type="InterPro" id="IPR036823">
    <property type="entry name" value="Ribosomal_uS7_dom_sf"/>
</dbReference>
<dbReference type="NCBIfam" id="TIGR01029">
    <property type="entry name" value="rpsG_bact"/>
    <property type="match status" value="1"/>
</dbReference>
<dbReference type="PANTHER" id="PTHR11205">
    <property type="entry name" value="RIBOSOMAL PROTEIN S7"/>
    <property type="match status" value="1"/>
</dbReference>
<dbReference type="Pfam" id="PF00177">
    <property type="entry name" value="Ribosomal_S7"/>
    <property type="match status" value="1"/>
</dbReference>
<dbReference type="PIRSF" id="PIRSF002122">
    <property type="entry name" value="RPS7p_RPS7a_RPS5e_RPS7o"/>
    <property type="match status" value="1"/>
</dbReference>
<dbReference type="SUPFAM" id="SSF47973">
    <property type="entry name" value="Ribosomal protein S7"/>
    <property type="match status" value="1"/>
</dbReference>
<feature type="chain" id="PRO_0000226492" description="Small ribosomal subunit protein uS7">
    <location>
        <begin position="1"/>
        <end position="155"/>
    </location>
</feature>
<comment type="function">
    <text evidence="1">One of the primary rRNA binding proteins, it binds directly to 16S rRNA where it nucleates assembly of the head domain of the 30S subunit. Is located at the subunit interface close to the decoding center, probably blocks exit of the E-site tRNA.</text>
</comment>
<comment type="subunit">
    <text evidence="1">Part of the 30S ribosomal subunit. Contacts proteins S9 and S11.</text>
</comment>
<comment type="similarity">
    <text evidence="1">Belongs to the universal ribosomal protein uS7 family.</text>
</comment>
<gene>
    <name evidence="1" type="primary">rpsG</name>
    <name type="ordered locus">Cag_1855</name>
</gene>
<protein>
    <recommendedName>
        <fullName evidence="1">Small ribosomal subunit protein uS7</fullName>
    </recommendedName>
    <alternativeName>
        <fullName evidence="2">30S ribosomal protein S7</fullName>
    </alternativeName>
</protein>
<name>RS7_CHLCH</name>
<proteinExistence type="inferred from homology"/>
<organism>
    <name type="scientific">Chlorobium chlorochromatii (strain CaD3)</name>
    <dbReference type="NCBI Taxonomy" id="340177"/>
    <lineage>
        <taxon>Bacteria</taxon>
        <taxon>Pseudomonadati</taxon>
        <taxon>Chlorobiota</taxon>
        <taxon>Chlorobiia</taxon>
        <taxon>Chlorobiales</taxon>
        <taxon>Chlorobiaceae</taxon>
        <taxon>Chlorobium/Pelodictyon group</taxon>
        <taxon>Chlorobium</taxon>
    </lineage>
</organism>
<sequence>MSKLRSYKKIGGDYRYGDESVARFINAVMLDGKKAVATKIVYDAFSIISERNNGEDALEIYRKAISNIAPVVEVRSKRVGGATYQIPMEVKPSRRSALAFRWLKIYAGKRGGKSMAEKLAAELMDAANDQGASVKKRDEVHRMAEANKAFAHFRF</sequence>